<keyword id="KW-0067">ATP-binding</keyword>
<keyword id="KW-0436">Ligase</keyword>
<keyword id="KW-0547">Nucleotide-binding</keyword>
<keyword id="KW-0658">Purine biosynthesis</keyword>
<keyword id="KW-1185">Reference proteome</keyword>
<accession>O25817</accession>
<sequence length="424" mass="47504">MKDNNNYNVLIVGNKGREYALAQRLQQDERVNALYFCLGNGGTQDLGENLECEHYEHIVELALKKQIHLAIISEEEFLVLGLTEMLEKAGILVFGASKEAAKLEASKSYMKAFVKECGIKSASYFETNDLKEALSYIQNASFPLVIKALNKNTSIVYQEEEAIKILEDAFKQSNEPVIIEPFLEGFELSVTALIANDDFILLPFCQNYKRLLEGDNGVNTGGMGAIAPANFFSNELEEKIKNHIFKPTLEKLQADNTPFKGVLLAEIVIIEEKGVLEPYLLDFSVRFKDIECQTILPLLESSLLDLCLATAKGELHSLELVFSKEFVMSVALVSRNYPTSSSPKQTLYIDPVDEKKGHLILGEVEQDNGVFESSGGRVIFAIGRGKSLLEARNHAYEIAQKVHFEGMFYRKDIGFKVLDLKEYS</sequence>
<feature type="chain" id="PRO_0000151453" description="Phosphoribosylamine--glycine ligase">
    <location>
        <begin position="1"/>
        <end position="424"/>
    </location>
</feature>
<feature type="domain" description="ATP-grasp" evidence="1">
    <location>
        <begin position="111"/>
        <end position="312"/>
    </location>
</feature>
<feature type="binding site" evidence="1">
    <location>
        <begin position="137"/>
        <end position="189"/>
    </location>
    <ligand>
        <name>ATP</name>
        <dbReference type="ChEBI" id="CHEBI:30616"/>
    </ligand>
</feature>
<organism>
    <name type="scientific">Helicobacter pylori (strain ATCC 700392 / 26695)</name>
    <name type="common">Campylobacter pylori</name>
    <dbReference type="NCBI Taxonomy" id="85962"/>
    <lineage>
        <taxon>Bacteria</taxon>
        <taxon>Pseudomonadati</taxon>
        <taxon>Campylobacterota</taxon>
        <taxon>Epsilonproteobacteria</taxon>
        <taxon>Campylobacterales</taxon>
        <taxon>Helicobacteraceae</taxon>
        <taxon>Helicobacter</taxon>
    </lineage>
</organism>
<name>PUR2_HELPY</name>
<dbReference type="EC" id="6.3.4.13"/>
<dbReference type="EMBL" id="AE000511">
    <property type="protein sequence ID" value="AAD08261.1"/>
    <property type="molecule type" value="Genomic_DNA"/>
</dbReference>
<dbReference type="PIR" id="B64672">
    <property type="entry name" value="B64672"/>
</dbReference>
<dbReference type="RefSeq" id="NP_208010.1">
    <property type="nucleotide sequence ID" value="NC_000915.1"/>
</dbReference>
<dbReference type="RefSeq" id="WP_000654350.1">
    <property type="nucleotide sequence ID" value="NC_018939.1"/>
</dbReference>
<dbReference type="SMR" id="O25817"/>
<dbReference type="DIP" id="DIP-3667N"/>
<dbReference type="FunCoup" id="O25817">
    <property type="interactions" value="258"/>
</dbReference>
<dbReference type="IntAct" id="O25817">
    <property type="interactions" value="3"/>
</dbReference>
<dbReference type="MINT" id="O25817"/>
<dbReference type="STRING" id="85962.HP_1218"/>
<dbReference type="PaxDb" id="85962-C694_06295"/>
<dbReference type="EnsemblBacteria" id="AAD08261">
    <property type="protein sequence ID" value="AAD08261"/>
    <property type="gene ID" value="HP_1218"/>
</dbReference>
<dbReference type="KEGG" id="heo:C694_06295"/>
<dbReference type="KEGG" id="hpy:HP_1218"/>
<dbReference type="PATRIC" id="fig|85962.47.peg.1307"/>
<dbReference type="eggNOG" id="COG0151">
    <property type="taxonomic scope" value="Bacteria"/>
</dbReference>
<dbReference type="InParanoid" id="O25817"/>
<dbReference type="OrthoDB" id="9807240at2"/>
<dbReference type="PhylomeDB" id="O25817"/>
<dbReference type="UniPathway" id="UPA00074">
    <property type="reaction ID" value="UER00125"/>
</dbReference>
<dbReference type="Proteomes" id="UP000000429">
    <property type="component" value="Chromosome"/>
</dbReference>
<dbReference type="GO" id="GO:0005524">
    <property type="term" value="F:ATP binding"/>
    <property type="evidence" value="ECO:0007669"/>
    <property type="project" value="UniProtKB-KW"/>
</dbReference>
<dbReference type="GO" id="GO:0046872">
    <property type="term" value="F:metal ion binding"/>
    <property type="evidence" value="ECO:0007669"/>
    <property type="project" value="InterPro"/>
</dbReference>
<dbReference type="GO" id="GO:0004637">
    <property type="term" value="F:phosphoribosylamine-glycine ligase activity"/>
    <property type="evidence" value="ECO:0007669"/>
    <property type="project" value="UniProtKB-UniRule"/>
</dbReference>
<dbReference type="GO" id="GO:0006189">
    <property type="term" value="P:'de novo' IMP biosynthetic process"/>
    <property type="evidence" value="ECO:0007669"/>
    <property type="project" value="UniProtKB-UniRule"/>
</dbReference>
<dbReference type="GO" id="GO:0009113">
    <property type="term" value="P:purine nucleobase biosynthetic process"/>
    <property type="evidence" value="ECO:0007669"/>
    <property type="project" value="InterPro"/>
</dbReference>
<dbReference type="Gene3D" id="3.40.50.20">
    <property type="match status" value="1"/>
</dbReference>
<dbReference type="Gene3D" id="3.30.1490.20">
    <property type="entry name" value="ATP-grasp fold, A domain"/>
    <property type="match status" value="1"/>
</dbReference>
<dbReference type="Gene3D" id="3.30.470.20">
    <property type="entry name" value="ATP-grasp fold, B domain"/>
    <property type="match status" value="1"/>
</dbReference>
<dbReference type="Gene3D" id="3.90.600.10">
    <property type="entry name" value="Phosphoribosylglycinamide synthetase, C-terminal domain"/>
    <property type="match status" value="1"/>
</dbReference>
<dbReference type="HAMAP" id="MF_00138">
    <property type="entry name" value="GARS"/>
    <property type="match status" value="1"/>
</dbReference>
<dbReference type="InterPro" id="IPR011761">
    <property type="entry name" value="ATP-grasp"/>
</dbReference>
<dbReference type="InterPro" id="IPR013815">
    <property type="entry name" value="ATP_grasp_subdomain_1"/>
</dbReference>
<dbReference type="InterPro" id="IPR016185">
    <property type="entry name" value="PreATP-grasp_dom_sf"/>
</dbReference>
<dbReference type="InterPro" id="IPR020561">
    <property type="entry name" value="PRibGlycinamid_synth_ATP-grasp"/>
</dbReference>
<dbReference type="InterPro" id="IPR000115">
    <property type="entry name" value="PRibGlycinamide_synth"/>
</dbReference>
<dbReference type="InterPro" id="IPR020560">
    <property type="entry name" value="PRibGlycinamide_synth_C-dom"/>
</dbReference>
<dbReference type="InterPro" id="IPR037123">
    <property type="entry name" value="PRibGlycinamide_synth_C_sf"/>
</dbReference>
<dbReference type="InterPro" id="IPR020562">
    <property type="entry name" value="PRibGlycinamide_synth_N"/>
</dbReference>
<dbReference type="InterPro" id="IPR011054">
    <property type="entry name" value="Rudment_hybrid_motif"/>
</dbReference>
<dbReference type="NCBIfam" id="TIGR00877">
    <property type="entry name" value="purD"/>
    <property type="match status" value="1"/>
</dbReference>
<dbReference type="PANTHER" id="PTHR43472">
    <property type="entry name" value="PHOSPHORIBOSYLAMINE--GLYCINE LIGASE"/>
    <property type="match status" value="1"/>
</dbReference>
<dbReference type="PANTHER" id="PTHR43472:SF1">
    <property type="entry name" value="PHOSPHORIBOSYLAMINE--GLYCINE LIGASE, CHLOROPLASTIC"/>
    <property type="match status" value="1"/>
</dbReference>
<dbReference type="Pfam" id="PF01071">
    <property type="entry name" value="GARS_A"/>
    <property type="match status" value="1"/>
</dbReference>
<dbReference type="Pfam" id="PF02843">
    <property type="entry name" value="GARS_C"/>
    <property type="match status" value="1"/>
</dbReference>
<dbReference type="Pfam" id="PF02844">
    <property type="entry name" value="GARS_N"/>
    <property type="match status" value="1"/>
</dbReference>
<dbReference type="SMART" id="SM01209">
    <property type="entry name" value="GARS_A"/>
    <property type="match status" value="1"/>
</dbReference>
<dbReference type="SMART" id="SM01210">
    <property type="entry name" value="GARS_C"/>
    <property type="match status" value="1"/>
</dbReference>
<dbReference type="SUPFAM" id="SSF56059">
    <property type="entry name" value="Glutathione synthetase ATP-binding domain-like"/>
    <property type="match status" value="1"/>
</dbReference>
<dbReference type="SUPFAM" id="SSF52440">
    <property type="entry name" value="PreATP-grasp domain"/>
    <property type="match status" value="1"/>
</dbReference>
<dbReference type="SUPFAM" id="SSF51246">
    <property type="entry name" value="Rudiment single hybrid motif"/>
    <property type="match status" value="1"/>
</dbReference>
<dbReference type="PROSITE" id="PS50975">
    <property type="entry name" value="ATP_GRASP"/>
    <property type="match status" value="1"/>
</dbReference>
<evidence type="ECO:0000255" key="1">
    <source>
        <dbReference type="PROSITE-ProRule" id="PRU00409"/>
    </source>
</evidence>
<evidence type="ECO:0000305" key="2"/>
<reference key="1">
    <citation type="journal article" date="1997" name="Nature">
        <title>The complete genome sequence of the gastric pathogen Helicobacter pylori.</title>
        <authorList>
            <person name="Tomb J.-F."/>
            <person name="White O."/>
            <person name="Kerlavage A.R."/>
            <person name="Clayton R.A."/>
            <person name="Sutton G.G."/>
            <person name="Fleischmann R.D."/>
            <person name="Ketchum K.A."/>
            <person name="Klenk H.-P."/>
            <person name="Gill S.R."/>
            <person name="Dougherty B.A."/>
            <person name="Nelson K.E."/>
            <person name="Quackenbush J."/>
            <person name="Zhou L."/>
            <person name="Kirkness E.F."/>
            <person name="Peterson S.N."/>
            <person name="Loftus B.J."/>
            <person name="Richardson D.L."/>
            <person name="Dodson R.J."/>
            <person name="Khalak H.G."/>
            <person name="Glodek A."/>
            <person name="McKenney K."/>
            <person name="FitzGerald L.M."/>
            <person name="Lee N."/>
            <person name="Adams M.D."/>
            <person name="Hickey E.K."/>
            <person name="Berg D.E."/>
            <person name="Gocayne J.D."/>
            <person name="Utterback T.R."/>
            <person name="Peterson J.D."/>
            <person name="Kelley J.M."/>
            <person name="Cotton M.D."/>
            <person name="Weidman J.F."/>
            <person name="Fujii C."/>
            <person name="Bowman C."/>
            <person name="Watthey L."/>
            <person name="Wallin E."/>
            <person name="Hayes W.S."/>
            <person name="Borodovsky M."/>
            <person name="Karp P.D."/>
            <person name="Smith H.O."/>
            <person name="Fraser C.M."/>
            <person name="Venter J.C."/>
        </authorList>
    </citation>
    <scope>NUCLEOTIDE SEQUENCE [LARGE SCALE GENOMIC DNA]</scope>
    <source>
        <strain>ATCC 700392 / 26695</strain>
    </source>
</reference>
<comment type="catalytic activity">
    <reaction>
        <text>5-phospho-beta-D-ribosylamine + glycine + ATP = N(1)-(5-phospho-beta-D-ribosyl)glycinamide + ADP + phosphate + H(+)</text>
        <dbReference type="Rhea" id="RHEA:17453"/>
        <dbReference type="ChEBI" id="CHEBI:15378"/>
        <dbReference type="ChEBI" id="CHEBI:30616"/>
        <dbReference type="ChEBI" id="CHEBI:43474"/>
        <dbReference type="ChEBI" id="CHEBI:57305"/>
        <dbReference type="ChEBI" id="CHEBI:58681"/>
        <dbReference type="ChEBI" id="CHEBI:143788"/>
        <dbReference type="ChEBI" id="CHEBI:456216"/>
        <dbReference type="EC" id="6.3.4.13"/>
    </reaction>
</comment>
<comment type="pathway">
    <text>Purine metabolism; IMP biosynthesis via de novo pathway; N(1)-(5-phospho-D-ribosyl)glycinamide from 5-phospho-alpha-D-ribose 1-diphosphate: step 2/2.</text>
</comment>
<comment type="similarity">
    <text evidence="2">Belongs to the GARS family.</text>
</comment>
<gene>
    <name type="primary">purD</name>
    <name type="ordered locus">HP_1218</name>
</gene>
<protein>
    <recommendedName>
        <fullName>Phosphoribosylamine--glycine ligase</fullName>
        <ecNumber>6.3.4.13</ecNumber>
    </recommendedName>
    <alternativeName>
        <fullName>GARS</fullName>
    </alternativeName>
    <alternativeName>
        <fullName>Glycinamide ribonucleotide synthetase</fullName>
    </alternativeName>
    <alternativeName>
        <fullName>Phosphoribosylglycinamide synthetase</fullName>
    </alternativeName>
</protein>
<proteinExistence type="inferred from homology"/>